<keyword id="KW-0998">Cell outer membrane</keyword>
<keyword id="KW-0135">Cellulose biosynthesis</keyword>
<keyword id="KW-0472">Membrane</keyword>
<keyword id="KW-0677">Repeat</keyword>
<keyword id="KW-0732">Signal</keyword>
<keyword id="KW-0802">TPR repeat</keyword>
<gene>
    <name type="primary">bcsC</name>
</gene>
<accession>O82861</accession>
<name>BCSC2_KOMSB</name>
<feature type="signal peptide" evidence="2">
    <location>
        <begin position="1"/>
        <end position="30"/>
    </location>
</feature>
<feature type="chain" id="PRO_0000035687" description="Cellulose synthase operon protein C">
    <location>
        <begin position="31"/>
        <end position="1326"/>
    </location>
</feature>
<feature type="repeat" description="TPR 1">
    <location>
        <begin position="49"/>
        <end position="82"/>
    </location>
</feature>
<feature type="repeat" description="TPR 2">
    <location>
        <begin position="291"/>
        <end position="324"/>
    </location>
</feature>
<feature type="repeat" description="TPR 3">
    <location>
        <begin position="325"/>
        <end position="358"/>
    </location>
</feature>
<feature type="repeat" description="TPR 4">
    <location>
        <begin position="405"/>
        <end position="438"/>
    </location>
</feature>
<feature type="repeat" description="TPR 5">
    <location>
        <begin position="557"/>
        <end position="590"/>
    </location>
</feature>
<feature type="repeat" description="TPR 6">
    <location>
        <begin position="701"/>
        <end position="734"/>
    </location>
</feature>
<feature type="region of interest" description="Disordered" evidence="3">
    <location>
        <begin position="841"/>
        <end position="867"/>
    </location>
</feature>
<organism>
    <name type="scientific">Komagataeibacter sucrofermentans (strain ATCC 700178 / DSM 15973 / CECT 7291 / JCM 9730 / LMG 18788 / BPR 2001)</name>
    <name type="common">Acetobacter xylinus subsp. sucrofermentans</name>
    <dbReference type="NCBI Taxonomy" id="1307942"/>
    <lineage>
        <taxon>Bacteria</taxon>
        <taxon>Pseudomonadati</taxon>
        <taxon>Pseudomonadota</taxon>
        <taxon>Alphaproteobacteria</taxon>
        <taxon>Acetobacterales</taxon>
        <taxon>Acetobacteraceae</taxon>
        <taxon>Komagataeibacter</taxon>
    </lineage>
</organism>
<proteinExistence type="inferred from homology"/>
<sequence length="1326" mass="142104">MNRRYALSLSGALLASSCMTVLVAVPVARAQQASTAVTSTAASPAAAPRQILLQQARFWLQQQQYDNARQALQNAQRIAPDAPDVLEVEGEYQAAVGNREAAADTLRHLQQVAPASTAVSNLSDLLSERAISQSDLSQIRSLAGSGQNAQAVAGYQKLFHGGKPPRSLAVEYYQTMAGVPTQWDQARAGLAGIVASNPQNYRAQLAFAQALTYNTSTRMEGLTRLKDLQSFQSQAPVEAAAATQSYRQTLSWLPVNPDTQPLMEQWLSAHPNDAALREHMLHPPGGPPDKAGLARQAGYQQLNAGRLSAAEQSFQSALQINSHDADSLGGMGLVSMRQGDTAEAHRYFEEAMAADPKTADRWRPALAGMAVSGDYAAVRQLIAAHQYTEAKQKLATLARQPGQYTGATLMLADLQRSTGQVAAAEQEYRGILSREPNNQLALMGLARVDMAQGNTAEARQLLSRVSPQYASQVGEIEVSGLMAAASQTSDSARKVSILREAMAQAPRDPWVRINLANALQQQGDVAEAGRVMQPILANPVTAQDRQAGILYTYGSGNDAMTRQLLAGLSPADYSPAIRSIAEEMEIKQDLASRLSMVSNPVPLIREALSQPDPTGARGVAVADLFRQRGDMVHARMALRIASTRTIDLSPDQRLSYATEYMKISNPVAAARLLAPLGDGTGSGAGNALLPEQMQTLQQLRMGISVAQSDLLNQRGDQAQAYDHLAPALQADPEATSPKLALARLYNGHGKPGKALEIDLAVLRHNPQDLDARQAAVQAAVNSNHNSLATRLAMDGVQESPMDARAWLAMAVADQADGHGQRTIEDLRRAYDLRLQQVEGTRAASGPVGAHEEALAPPSTNPFQSRGYGHQVELGAPVTGGSYSAEAASPDTSDQMLSSIAGQIHTLRENLAPSIDGGLGFRSRSGEHGMGRLTEANIPIVGRLPLQAGASALTFSITPTMIWSGQLNTGSVYDVPRYGTFMATQAANQCAGHSSCGGLDFLSANHTQRIAAGAGEAGFAPDVQFGNSWVRADVCASPIGFPITNVLGGVEFSPRVGPVTFRVSAERRSITNSVLSYGGLRDPNYNSEVGRYARQVYGHDLTKQWGSEWGGVVTNHFHGQVEATLGNTILYGGGGYAIQTGKNVQRNSEREAGIGANTLVWHNANMLVRIGVSLTYFGYAHNEDFYTYGQGGYFSPQSYYAATVPVRYAGQHKRLDWDVTGSVGYQVFHEHAAPFFPTSSLLQSGANYVASNFVQNALPTDYLSQETVNSAYYPGDSIAGLTGGFNARVGYRFTRNVRLDLSGRYQKAGNWTESGAMISAHYLIMDQ</sequence>
<reference key="1">
    <citation type="journal article" date="1998" name="Gene">
        <title>Control of expression by the cellulose synthase (bcsA) promoter region from Acetobacter xylinum BPR 2001.</title>
        <authorList>
            <person name="Nakai T."/>
            <person name="Moriya A."/>
            <person name="Tonouchi N."/>
            <person name="Tsuchida T."/>
            <person name="Yoshinaga F."/>
            <person name="Horinouchi S."/>
            <person name="Sone Y."/>
            <person name="Mori H."/>
            <person name="Sakai F."/>
            <person name="Hayashi T."/>
        </authorList>
    </citation>
    <scope>NUCLEOTIDE SEQUENCE [GENOMIC DNA]</scope>
    <source>
        <strain>ATCC 700178 / DSM 15973 / CECT 7291 / JCM 9730 / LMG 18788 / BPR 2001</strain>
    </source>
</reference>
<protein>
    <recommendedName>
        <fullName>Cellulose synthase operon protein C</fullName>
    </recommendedName>
</protein>
<evidence type="ECO:0000250" key="1"/>
<evidence type="ECO:0000255" key="2"/>
<evidence type="ECO:0000256" key="3">
    <source>
        <dbReference type="SAM" id="MobiDB-lite"/>
    </source>
</evidence>
<evidence type="ECO:0000305" key="4"/>
<comment type="function">
    <text evidence="1">Required for maximal bacterial cellulose synthesis. It may be involved in the formation of a membrane complex for extrusion of the cellulose product (By similarity).</text>
</comment>
<comment type="pathway">
    <text>Glycan metabolism; bacterial cellulose biosynthesis.</text>
</comment>
<comment type="subcellular location">
    <subcellularLocation>
        <location evidence="4">Cell outer membrane</location>
        <topology evidence="4">Peripheral membrane protein</topology>
    </subcellularLocation>
</comment>
<comment type="similarity">
    <text evidence="4">Belongs to the AcsC/BcsC family.</text>
</comment>
<dbReference type="EMBL" id="AB010645">
    <property type="protein sequence ID" value="BAA31465.1"/>
    <property type="molecule type" value="Genomic_DNA"/>
</dbReference>
<dbReference type="UniPathway" id="UPA00694"/>
<dbReference type="GO" id="GO:0009279">
    <property type="term" value="C:cell outer membrane"/>
    <property type="evidence" value="ECO:0007669"/>
    <property type="project" value="UniProtKB-SubCell"/>
</dbReference>
<dbReference type="GO" id="GO:0030244">
    <property type="term" value="P:cellulose biosynthetic process"/>
    <property type="evidence" value="ECO:0007669"/>
    <property type="project" value="UniProtKB-KW"/>
</dbReference>
<dbReference type="GO" id="GO:0006011">
    <property type="term" value="P:UDP-alpha-D-glucose metabolic process"/>
    <property type="evidence" value="ECO:0007669"/>
    <property type="project" value="InterPro"/>
</dbReference>
<dbReference type="Gene3D" id="1.25.40.10">
    <property type="entry name" value="Tetratricopeptide repeat domain"/>
    <property type="match status" value="3"/>
</dbReference>
<dbReference type="InterPro" id="IPR008410">
    <property type="entry name" value="BCSC_C"/>
</dbReference>
<dbReference type="InterPro" id="IPR003921">
    <property type="entry name" value="Cell_synth_C"/>
</dbReference>
<dbReference type="InterPro" id="IPR051012">
    <property type="entry name" value="CellSynth/LPSAsmb/PSIAsmb"/>
</dbReference>
<dbReference type="InterPro" id="IPR011990">
    <property type="entry name" value="TPR-like_helical_dom_sf"/>
</dbReference>
<dbReference type="InterPro" id="IPR019734">
    <property type="entry name" value="TPR_rpt"/>
</dbReference>
<dbReference type="PANTHER" id="PTHR45586:SF1">
    <property type="entry name" value="LIPOPOLYSACCHARIDE ASSEMBLY PROTEIN B"/>
    <property type="match status" value="1"/>
</dbReference>
<dbReference type="PANTHER" id="PTHR45586">
    <property type="entry name" value="TPR REPEAT-CONTAINING PROTEIN PA4667"/>
    <property type="match status" value="1"/>
</dbReference>
<dbReference type="Pfam" id="PF05420">
    <property type="entry name" value="BCSC_C"/>
    <property type="match status" value="1"/>
</dbReference>
<dbReference type="Pfam" id="PF14559">
    <property type="entry name" value="TPR_19"/>
    <property type="match status" value="3"/>
</dbReference>
<dbReference type="PRINTS" id="PR01441">
    <property type="entry name" value="CELLSNTHASEC"/>
</dbReference>
<dbReference type="SMART" id="SM00028">
    <property type="entry name" value="TPR"/>
    <property type="match status" value="5"/>
</dbReference>
<dbReference type="SUPFAM" id="SSF48452">
    <property type="entry name" value="TPR-like"/>
    <property type="match status" value="3"/>
</dbReference>
<dbReference type="PROSITE" id="PS50005">
    <property type="entry name" value="TPR"/>
    <property type="match status" value="7"/>
</dbReference>
<dbReference type="PROSITE" id="PS50293">
    <property type="entry name" value="TPR_REGION"/>
    <property type="match status" value="4"/>
</dbReference>